<feature type="chain" id="PRO_0000305644" description="Phosphoglucosamine mutase">
    <location>
        <begin position="1"/>
        <end position="445"/>
    </location>
</feature>
<feature type="active site" description="Phosphoserine intermediate" evidence="1">
    <location>
        <position position="105"/>
    </location>
</feature>
<feature type="binding site" description="via phosphate group" evidence="1">
    <location>
        <position position="105"/>
    </location>
    <ligand>
        <name>Mg(2+)</name>
        <dbReference type="ChEBI" id="CHEBI:18420"/>
    </ligand>
</feature>
<feature type="binding site" evidence="1">
    <location>
        <position position="244"/>
    </location>
    <ligand>
        <name>Mg(2+)</name>
        <dbReference type="ChEBI" id="CHEBI:18420"/>
    </ligand>
</feature>
<feature type="binding site" evidence="1">
    <location>
        <position position="246"/>
    </location>
    <ligand>
        <name>Mg(2+)</name>
        <dbReference type="ChEBI" id="CHEBI:18420"/>
    </ligand>
</feature>
<feature type="binding site" evidence="1">
    <location>
        <position position="248"/>
    </location>
    <ligand>
        <name>Mg(2+)</name>
        <dbReference type="ChEBI" id="CHEBI:18420"/>
    </ligand>
</feature>
<feature type="modified residue" description="Phosphoserine" evidence="1">
    <location>
        <position position="105"/>
    </location>
</feature>
<keyword id="KW-0413">Isomerase</keyword>
<keyword id="KW-0460">Magnesium</keyword>
<keyword id="KW-0479">Metal-binding</keyword>
<keyword id="KW-0597">Phosphoprotein</keyword>
<accession>A6T078</accession>
<reference key="1">
    <citation type="journal article" date="2007" name="PLoS Genet.">
        <title>Genome analysis of Minibacterium massiliensis highlights the convergent evolution of water-living bacteria.</title>
        <authorList>
            <person name="Audic S."/>
            <person name="Robert C."/>
            <person name="Campagna B."/>
            <person name="Parinello H."/>
            <person name="Claverie J.-M."/>
            <person name="Raoult D."/>
            <person name="Drancourt M."/>
        </authorList>
    </citation>
    <scope>NUCLEOTIDE SEQUENCE [LARGE SCALE GENOMIC DNA]</scope>
    <source>
        <strain>Marseille</strain>
    </source>
</reference>
<organism>
    <name type="scientific">Janthinobacterium sp. (strain Marseille)</name>
    <name type="common">Minibacterium massiliensis</name>
    <dbReference type="NCBI Taxonomy" id="375286"/>
    <lineage>
        <taxon>Bacteria</taxon>
        <taxon>Pseudomonadati</taxon>
        <taxon>Pseudomonadota</taxon>
        <taxon>Betaproteobacteria</taxon>
        <taxon>Burkholderiales</taxon>
        <taxon>Oxalobacteraceae</taxon>
        <taxon>Janthinobacterium</taxon>
    </lineage>
</organism>
<name>GLMM_JANMA</name>
<gene>
    <name evidence="1" type="primary">glmM</name>
    <name type="ordered locus">mma_2235</name>
</gene>
<protein>
    <recommendedName>
        <fullName evidence="1">Phosphoglucosamine mutase</fullName>
        <ecNumber evidence="1">5.4.2.10</ecNumber>
    </recommendedName>
</protein>
<evidence type="ECO:0000255" key="1">
    <source>
        <dbReference type="HAMAP-Rule" id="MF_01554"/>
    </source>
</evidence>
<sequence length="445" mass="47803">MTRQYFGTDGVRGKVGTSPITPDFVMRLGYAAGTVLTKSRKASSRPVVLIGKDTRISGYMLEAALEAGFSAAGVDVMLAGPMPTPAIAYLTRALRLSAGVVISASHNPYEDNGIKFFSASGNKLPDAIELEIEAALNEPMSCVASEKLGRAKRLDDARGRYIEFCKSTFPNELDLRGTKLVVDCAHGAAYHIAPDVFHELGAEVIAIGNQPNGFNINEGYGATAPAALVEAVRANQAHLGIALDGDADRLLVVDAAGRVYNGDELLYIMVKDRMRVRPIEGAVGTLMTNMALEVAFKEMGVGFARANVGDRYVLEVLRERGWQVGGEGSGHMLCLDKHTTGDGIVSALQILSALKRSGLSLAELTQDIEMFPQTLINVKVEPGFDWKKNKELLAEKEAVEAELGDKGRVLIRASGTEPLIRVMVEAKDADIADKMARRIAAKLSK</sequence>
<dbReference type="EC" id="5.4.2.10" evidence="1"/>
<dbReference type="EMBL" id="CP000269">
    <property type="protein sequence ID" value="ABR89338.1"/>
    <property type="molecule type" value="Genomic_DNA"/>
</dbReference>
<dbReference type="RefSeq" id="WP_012080088.1">
    <property type="nucleotide sequence ID" value="NC_009659.1"/>
</dbReference>
<dbReference type="SMR" id="A6T078"/>
<dbReference type="STRING" id="375286.mma_2235"/>
<dbReference type="KEGG" id="mms:mma_2235"/>
<dbReference type="eggNOG" id="COG1109">
    <property type="taxonomic scope" value="Bacteria"/>
</dbReference>
<dbReference type="HOGENOM" id="CLU_016950_7_0_4"/>
<dbReference type="OrthoDB" id="9803322at2"/>
<dbReference type="Proteomes" id="UP000006388">
    <property type="component" value="Chromosome"/>
</dbReference>
<dbReference type="GO" id="GO:0005829">
    <property type="term" value="C:cytosol"/>
    <property type="evidence" value="ECO:0007669"/>
    <property type="project" value="TreeGrafter"/>
</dbReference>
<dbReference type="GO" id="GO:0000287">
    <property type="term" value="F:magnesium ion binding"/>
    <property type="evidence" value="ECO:0007669"/>
    <property type="project" value="UniProtKB-UniRule"/>
</dbReference>
<dbReference type="GO" id="GO:0008966">
    <property type="term" value="F:phosphoglucosamine mutase activity"/>
    <property type="evidence" value="ECO:0007669"/>
    <property type="project" value="UniProtKB-UniRule"/>
</dbReference>
<dbReference type="GO" id="GO:0004615">
    <property type="term" value="F:phosphomannomutase activity"/>
    <property type="evidence" value="ECO:0007669"/>
    <property type="project" value="TreeGrafter"/>
</dbReference>
<dbReference type="GO" id="GO:0005975">
    <property type="term" value="P:carbohydrate metabolic process"/>
    <property type="evidence" value="ECO:0007669"/>
    <property type="project" value="InterPro"/>
</dbReference>
<dbReference type="GO" id="GO:0009252">
    <property type="term" value="P:peptidoglycan biosynthetic process"/>
    <property type="evidence" value="ECO:0007669"/>
    <property type="project" value="TreeGrafter"/>
</dbReference>
<dbReference type="GO" id="GO:0006048">
    <property type="term" value="P:UDP-N-acetylglucosamine biosynthetic process"/>
    <property type="evidence" value="ECO:0007669"/>
    <property type="project" value="TreeGrafter"/>
</dbReference>
<dbReference type="CDD" id="cd05802">
    <property type="entry name" value="GlmM"/>
    <property type="match status" value="1"/>
</dbReference>
<dbReference type="FunFam" id="3.30.310.50:FF:000001">
    <property type="entry name" value="Phosphoglucosamine mutase"/>
    <property type="match status" value="1"/>
</dbReference>
<dbReference type="FunFam" id="3.40.120.10:FF:000001">
    <property type="entry name" value="Phosphoglucosamine mutase"/>
    <property type="match status" value="1"/>
</dbReference>
<dbReference type="FunFam" id="3.40.120.10:FF:000003">
    <property type="entry name" value="Phosphoglucosamine mutase"/>
    <property type="match status" value="1"/>
</dbReference>
<dbReference type="Gene3D" id="3.40.120.10">
    <property type="entry name" value="Alpha-D-Glucose-1,6-Bisphosphate, subunit A, domain 3"/>
    <property type="match status" value="3"/>
</dbReference>
<dbReference type="Gene3D" id="3.30.310.50">
    <property type="entry name" value="Alpha-D-phosphohexomutase, C-terminal domain"/>
    <property type="match status" value="1"/>
</dbReference>
<dbReference type="HAMAP" id="MF_01554_B">
    <property type="entry name" value="GlmM_B"/>
    <property type="match status" value="1"/>
</dbReference>
<dbReference type="InterPro" id="IPR005844">
    <property type="entry name" value="A-D-PHexomutase_a/b/a-I"/>
</dbReference>
<dbReference type="InterPro" id="IPR016055">
    <property type="entry name" value="A-D-PHexomutase_a/b/a-I/II/III"/>
</dbReference>
<dbReference type="InterPro" id="IPR005845">
    <property type="entry name" value="A-D-PHexomutase_a/b/a-II"/>
</dbReference>
<dbReference type="InterPro" id="IPR005846">
    <property type="entry name" value="A-D-PHexomutase_a/b/a-III"/>
</dbReference>
<dbReference type="InterPro" id="IPR005843">
    <property type="entry name" value="A-D-PHexomutase_C"/>
</dbReference>
<dbReference type="InterPro" id="IPR036900">
    <property type="entry name" value="A-D-PHexomutase_C_sf"/>
</dbReference>
<dbReference type="InterPro" id="IPR016066">
    <property type="entry name" value="A-D-PHexomutase_CS"/>
</dbReference>
<dbReference type="InterPro" id="IPR005841">
    <property type="entry name" value="Alpha-D-phosphohexomutase_SF"/>
</dbReference>
<dbReference type="InterPro" id="IPR006352">
    <property type="entry name" value="GlmM_bact"/>
</dbReference>
<dbReference type="InterPro" id="IPR050060">
    <property type="entry name" value="Phosphoglucosamine_mutase"/>
</dbReference>
<dbReference type="NCBIfam" id="TIGR01455">
    <property type="entry name" value="glmM"/>
    <property type="match status" value="1"/>
</dbReference>
<dbReference type="NCBIfam" id="NF008139">
    <property type="entry name" value="PRK10887.1"/>
    <property type="match status" value="1"/>
</dbReference>
<dbReference type="PANTHER" id="PTHR42946:SF1">
    <property type="entry name" value="PHOSPHOGLUCOMUTASE (ALPHA-D-GLUCOSE-1,6-BISPHOSPHATE-DEPENDENT)"/>
    <property type="match status" value="1"/>
</dbReference>
<dbReference type="PANTHER" id="PTHR42946">
    <property type="entry name" value="PHOSPHOHEXOSE MUTASE"/>
    <property type="match status" value="1"/>
</dbReference>
<dbReference type="Pfam" id="PF02878">
    <property type="entry name" value="PGM_PMM_I"/>
    <property type="match status" value="1"/>
</dbReference>
<dbReference type="Pfam" id="PF02879">
    <property type="entry name" value="PGM_PMM_II"/>
    <property type="match status" value="1"/>
</dbReference>
<dbReference type="Pfam" id="PF02880">
    <property type="entry name" value="PGM_PMM_III"/>
    <property type="match status" value="1"/>
</dbReference>
<dbReference type="Pfam" id="PF00408">
    <property type="entry name" value="PGM_PMM_IV"/>
    <property type="match status" value="1"/>
</dbReference>
<dbReference type="PRINTS" id="PR00509">
    <property type="entry name" value="PGMPMM"/>
</dbReference>
<dbReference type="SUPFAM" id="SSF55957">
    <property type="entry name" value="Phosphoglucomutase, C-terminal domain"/>
    <property type="match status" value="1"/>
</dbReference>
<dbReference type="SUPFAM" id="SSF53738">
    <property type="entry name" value="Phosphoglucomutase, first 3 domains"/>
    <property type="match status" value="3"/>
</dbReference>
<dbReference type="PROSITE" id="PS00710">
    <property type="entry name" value="PGM_PMM"/>
    <property type="match status" value="1"/>
</dbReference>
<comment type="function">
    <text evidence="1">Catalyzes the conversion of glucosamine-6-phosphate to glucosamine-1-phosphate.</text>
</comment>
<comment type="catalytic activity">
    <reaction evidence="1">
        <text>alpha-D-glucosamine 1-phosphate = D-glucosamine 6-phosphate</text>
        <dbReference type="Rhea" id="RHEA:23424"/>
        <dbReference type="ChEBI" id="CHEBI:58516"/>
        <dbReference type="ChEBI" id="CHEBI:58725"/>
        <dbReference type="EC" id="5.4.2.10"/>
    </reaction>
</comment>
<comment type="cofactor">
    <cofactor evidence="1">
        <name>Mg(2+)</name>
        <dbReference type="ChEBI" id="CHEBI:18420"/>
    </cofactor>
    <text evidence="1">Binds 1 Mg(2+) ion per subunit.</text>
</comment>
<comment type="PTM">
    <text evidence="1">Activated by phosphorylation.</text>
</comment>
<comment type="similarity">
    <text evidence="1">Belongs to the phosphohexose mutase family.</text>
</comment>
<proteinExistence type="inferred from homology"/>